<sequence length="257" mass="27844">MIVAVDVGNTSTKIALCENGTVVDKWRISTCGKRTAAEYFSCISVLASRRSADILAGVRGAAISSVVPVVNRHVEELFERFFNISPVFITNSHADLFGLKICLAQPTIGADRVADLVAAKTLWPTSDLLVIDMGTATVFNLLDRNGGLYGQVVAPGVSCLVHSMRECTALLPQTLVRESEKIVCDSTAASLEAGLYWGYRAMVEGITKQIMRESTRTLRVIATGGGVGLFRNCDYLNHIDELLTIKGIVQIYEKTQG</sequence>
<feature type="chain" id="PRO_0000267489" description="Type III pantothenate kinase">
    <location>
        <begin position="1"/>
        <end position="257"/>
    </location>
</feature>
<feature type="active site" description="Proton acceptor" evidence="1">
    <location>
        <position position="111"/>
    </location>
</feature>
<feature type="binding site" evidence="1">
    <location>
        <begin position="6"/>
        <end position="13"/>
    </location>
    <ligand>
        <name>ATP</name>
        <dbReference type="ChEBI" id="CHEBI:30616"/>
    </ligand>
</feature>
<feature type="binding site" evidence="1">
    <location>
        <begin position="109"/>
        <end position="112"/>
    </location>
    <ligand>
        <name>substrate</name>
    </ligand>
</feature>
<feature type="binding site" evidence="1">
    <location>
        <position position="132"/>
    </location>
    <ligand>
        <name>K(+)</name>
        <dbReference type="ChEBI" id="CHEBI:29103"/>
    </ligand>
</feature>
<feature type="binding site" evidence="1">
    <location>
        <position position="135"/>
    </location>
    <ligand>
        <name>ATP</name>
        <dbReference type="ChEBI" id="CHEBI:30616"/>
    </ligand>
</feature>
<feature type="binding site" evidence="1">
    <location>
        <position position="187"/>
    </location>
    <ligand>
        <name>substrate</name>
    </ligand>
</feature>
<proteinExistence type="inferred from homology"/>
<organism>
    <name type="scientific">Anaplasma marginale (strain St. Maries)</name>
    <dbReference type="NCBI Taxonomy" id="234826"/>
    <lineage>
        <taxon>Bacteria</taxon>
        <taxon>Pseudomonadati</taxon>
        <taxon>Pseudomonadota</taxon>
        <taxon>Alphaproteobacteria</taxon>
        <taxon>Rickettsiales</taxon>
        <taxon>Anaplasmataceae</taxon>
        <taxon>Anaplasma</taxon>
    </lineage>
</organism>
<reference key="1">
    <citation type="journal article" date="2005" name="Proc. Natl. Acad. Sci. U.S.A.">
        <title>Complete genome sequencing of Anaplasma marginale reveals that the surface is skewed to two superfamilies of outer membrane proteins.</title>
        <authorList>
            <person name="Brayton K.A."/>
            <person name="Kappmeyer L.S."/>
            <person name="Herndon D.R."/>
            <person name="Dark M.J."/>
            <person name="Tibbals D.L."/>
            <person name="Palmer G.H."/>
            <person name="McGuire T.C."/>
            <person name="Knowles D.P. Jr."/>
        </authorList>
    </citation>
    <scope>NUCLEOTIDE SEQUENCE [LARGE SCALE GENOMIC DNA]</scope>
    <source>
        <strain>St. Maries</strain>
    </source>
</reference>
<evidence type="ECO:0000255" key="1">
    <source>
        <dbReference type="HAMAP-Rule" id="MF_01274"/>
    </source>
</evidence>
<gene>
    <name evidence="1" type="primary">coaX</name>
    <name type="ordered locus">AM271</name>
</gene>
<keyword id="KW-0067">ATP-binding</keyword>
<keyword id="KW-0173">Coenzyme A biosynthesis</keyword>
<keyword id="KW-0963">Cytoplasm</keyword>
<keyword id="KW-0418">Kinase</keyword>
<keyword id="KW-0479">Metal-binding</keyword>
<keyword id="KW-0547">Nucleotide-binding</keyword>
<keyword id="KW-0630">Potassium</keyword>
<keyword id="KW-0808">Transferase</keyword>
<protein>
    <recommendedName>
        <fullName evidence="1">Type III pantothenate kinase</fullName>
        <ecNumber evidence="1">2.7.1.33</ecNumber>
    </recommendedName>
    <alternativeName>
        <fullName evidence="1">PanK-III</fullName>
    </alternativeName>
    <alternativeName>
        <fullName evidence="1">Pantothenic acid kinase</fullName>
    </alternativeName>
</protein>
<name>COAX_ANAMM</name>
<accession>Q5PBF7</accession>
<comment type="function">
    <text evidence="1">Catalyzes the phosphorylation of pantothenate (Pan), the first step in CoA biosynthesis.</text>
</comment>
<comment type="catalytic activity">
    <reaction evidence="1">
        <text>(R)-pantothenate + ATP = (R)-4'-phosphopantothenate + ADP + H(+)</text>
        <dbReference type="Rhea" id="RHEA:16373"/>
        <dbReference type="ChEBI" id="CHEBI:10986"/>
        <dbReference type="ChEBI" id="CHEBI:15378"/>
        <dbReference type="ChEBI" id="CHEBI:29032"/>
        <dbReference type="ChEBI" id="CHEBI:30616"/>
        <dbReference type="ChEBI" id="CHEBI:456216"/>
        <dbReference type="EC" id="2.7.1.33"/>
    </reaction>
</comment>
<comment type="cofactor">
    <cofactor evidence="1">
        <name>NH4(+)</name>
        <dbReference type="ChEBI" id="CHEBI:28938"/>
    </cofactor>
    <cofactor evidence="1">
        <name>K(+)</name>
        <dbReference type="ChEBI" id="CHEBI:29103"/>
    </cofactor>
    <text evidence="1">A monovalent cation. Ammonium or potassium.</text>
</comment>
<comment type="pathway">
    <text evidence="1">Cofactor biosynthesis; coenzyme A biosynthesis; CoA from (R)-pantothenate: step 1/5.</text>
</comment>
<comment type="subunit">
    <text evidence="1">Homodimer.</text>
</comment>
<comment type="subcellular location">
    <subcellularLocation>
        <location evidence="1">Cytoplasm</location>
    </subcellularLocation>
</comment>
<comment type="similarity">
    <text evidence="1">Belongs to the type III pantothenate kinase family.</text>
</comment>
<dbReference type="EC" id="2.7.1.33" evidence="1"/>
<dbReference type="EMBL" id="CP000030">
    <property type="protein sequence ID" value="AAV86372.1"/>
    <property type="molecule type" value="Genomic_DNA"/>
</dbReference>
<dbReference type="RefSeq" id="WP_011114190.1">
    <property type="nucleotide sequence ID" value="NC_004842.2"/>
</dbReference>
<dbReference type="SMR" id="Q5PBF7"/>
<dbReference type="KEGG" id="ama:AM271"/>
<dbReference type="HOGENOM" id="CLU_066627_1_0_5"/>
<dbReference type="UniPathway" id="UPA00241">
    <property type="reaction ID" value="UER00352"/>
</dbReference>
<dbReference type="GO" id="GO:0005737">
    <property type="term" value="C:cytoplasm"/>
    <property type="evidence" value="ECO:0007669"/>
    <property type="project" value="UniProtKB-SubCell"/>
</dbReference>
<dbReference type="GO" id="GO:0005524">
    <property type="term" value="F:ATP binding"/>
    <property type="evidence" value="ECO:0007669"/>
    <property type="project" value="UniProtKB-UniRule"/>
</dbReference>
<dbReference type="GO" id="GO:0046872">
    <property type="term" value="F:metal ion binding"/>
    <property type="evidence" value="ECO:0007669"/>
    <property type="project" value="UniProtKB-KW"/>
</dbReference>
<dbReference type="GO" id="GO:0004594">
    <property type="term" value="F:pantothenate kinase activity"/>
    <property type="evidence" value="ECO:0007669"/>
    <property type="project" value="UniProtKB-UniRule"/>
</dbReference>
<dbReference type="GO" id="GO:0015937">
    <property type="term" value="P:coenzyme A biosynthetic process"/>
    <property type="evidence" value="ECO:0007669"/>
    <property type="project" value="UniProtKB-UniRule"/>
</dbReference>
<dbReference type="CDD" id="cd24015">
    <property type="entry name" value="ASKHA_NBD_PanK-III"/>
    <property type="match status" value="1"/>
</dbReference>
<dbReference type="Gene3D" id="3.30.420.40">
    <property type="match status" value="2"/>
</dbReference>
<dbReference type="HAMAP" id="MF_01274">
    <property type="entry name" value="Pantothen_kinase_3"/>
    <property type="match status" value="1"/>
</dbReference>
<dbReference type="InterPro" id="IPR043129">
    <property type="entry name" value="ATPase_NBD"/>
</dbReference>
<dbReference type="InterPro" id="IPR004619">
    <property type="entry name" value="Type_III_PanK"/>
</dbReference>
<dbReference type="NCBIfam" id="TIGR00671">
    <property type="entry name" value="baf"/>
    <property type="match status" value="1"/>
</dbReference>
<dbReference type="NCBIfam" id="NF009848">
    <property type="entry name" value="PRK13318.1-6"/>
    <property type="match status" value="1"/>
</dbReference>
<dbReference type="PANTHER" id="PTHR34265">
    <property type="entry name" value="TYPE III PANTOTHENATE KINASE"/>
    <property type="match status" value="1"/>
</dbReference>
<dbReference type="PANTHER" id="PTHR34265:SF1">
    <property type="entry name" value="TYPE III PANTOTHENATE KINASE"/>
    <property type="match status" value="1"/>
</dbReference>
<dbReference type="Pfam" id="PF03309">
    <property type="entry name" value="Pan_kinase"/>
    <property type="match status" value="1"/>
</dbReference>
<dbReference type="SUPFAM" id="SSF53067">
    <property type="entry name" value="Actin-like ATPase domain"/>
    <property type="match status" value="2"/>
</dbReference>